<proteinExistence type="inferred from homology"/>
<reference key="1">
    <citation type="submission" date="2008-02" db="EMBL/GenBank/DDBJ databases">
        <title>Complete sequence of Haemophilus somnus 2336.</title>
        <authorList>
            <consortium name="US DOE Joint Genome Institute"/>
            <person name="Siddaramappa S."/>
            <person name="Duncan A.J."/>
            <person name="Challacombe J.F."/>
            <person name="Rainey D."/>
            <person name="Gillaspy A.F."/>
            <person name="Carson M."/>
            <person name="Gipson J."/>
            <person name="Gipson M."/>
            <person name="Bruce D."/>
            <person name="Detter J.C."/>
            <person name="Han C.S."/>
            <person name="Land M."/>
            <person name="Tapia R."/>
            <person name="Thompson L.S."/>
            <person name="Orvis J."/>
            <person name="Zaitshik J."/>
            <person name="Barnes G."/>
            <person name="Brettin T.S."/>
            <person name="Dyer D.W."/>
            <person name="Inzana T.J."/>
        </authorList>
    </citation>
    <scope>NUCLEOTIDE SEQUENCE [LARGE SCALE GENOMIC DNA]</scope>
    <source>
        <strain>2336</strain>
    </source>
</reference>
<name>SYP_HISS2</name>
<comment type="function">
    <text evidence="1">Catalyzes the attachment of proline to tRNA(Pro) in a two-step reaction: proline is first activated by ATP to form Pro-AMP and then transferred to the acceptor end of tRNA(Pro). As ProRS can inadvertently accommodate and process non-cognate amino acids such as alanine and cysteine, to avoid such errors it has two additional distinct editing activities against alanine. One activity is designated as 'pretransfer' editing and involves the tRNA(Pro)-independent hydrolysis of activated Ala-AMP. The other activity is designated 'posttransfer' editing and involves deacylation of mischarged Ala-tRNA(Pro). The misacylated Cys-tRNA(Pro) is not edited by ProRS.</text>
</comment>
<comment type="catalytic activity">
    <reaction evidence="1">
        <text>tRNA(Pro) + L-proline + ATP = L-prolyl-tRNA(Pro) + AMP + diphosphate</text>
        <dbReference type="Rhea" id="RHEA:14305"/>
        <dbReference type="Rhea" id="RHEA-COMP:9700"/>
        <dbReference type="Rhea" id="RHEA-COMP:9702"/>
        <dbReference type="ChEBI" id="CHEBI:30616"/>
        <dbReference type="ChEBI" id="CHEBI:33019"/>
        <dbReference type="ChEBI" id="CHEBI:60039"/>
        <dbReference type="ChEBI" id="CHEBI:78442"/>
        <dbReference type="ChEBI" id="CHEBI:78532"/>
        <dbReference type="ChEBI" id="CHEBI:456215"/>
        <dbReference type="EC" id="6.1.1.15"/>
    </reaction>
</comment>
<comment type="subunit">
    <text evidence="1">Homodimer.</text>
</comment>
<comment type="subcellular location">
    <subcellularLocation>
        <location evidence="1">Cytoplasm</location>
    </subcellularLocation>
</comment>
<comment type="domain">
    <text evidence="1">Consists of three domains: the N-terminal catalytic domain, the editing domain and the C-terminal anticodon-binding domain.</text>
</comment>
<comment type="similarity">
    <text evidence="1">Belongs to the class-II aminoacyl-tRNA synthetase family. ProS type 1 subfamily.</text>
</comment>
<keyword id="KW-0030">Aminoacyl-tRNA synthetase</keyword>
<keyword id="KW-0067">ATP-binding</keyword>
<keyword id="KW-0963">Cytoplasm</keyword>
<keyword id="KW-0436">Ligase</keyword>
<keyword id="KW-0547">Nucleotide-binding</keyword>
<keyword id="KW-0648">Protein biosynthesis</keyword>
<feature type="chain" id="PRO_1000087841" description="Proline--tRNA ligase">
    <location>
        <begin position="1"/>
        <end position="571"/>
    </location>
</feature>
<protein>
    <recommendedName>
        <fullName evidence="1">Proline--tRNA ligase</fullName>
        <ecNumber evidence="1">6.1.1.15</ecNumber>
    </recommendedName>
    <alternativeName>
        <fullName evidence="1">Prolyl-tRNA synthetase</fullName>
        <shortName evidence="1">ProRS</shortName>
    </alternativeName>
</protein>
<evidence type="ECO:0000255" key="1">
    <source>
        <dbReference type="HAMAP-Rule" id="MF_01569"/>
    </source>
</evidence>
<organism>
    <name type="scientific">Histophilus somni (strain 2336)</name>
    <name type="common">Haemophilus somnus</name>
    <dbReference type="NCBI Taxonomy" id="228400"/>
    <lineage>
        <taxon>Bacteria</taxon>
        <taxon>Pseudomonadati</taxon>
        <taxon>Pseudomonadota</taxon>
        <taxon>Gammaproteobacteria</taxon>
        <taxon>Pasteurellales</taxon>
        <taxon>Pasteurellaceae</taxon>
        <taxon>Histophilus</taxon>
    </lineage>
</organism>
<accession>B0UWK9</accession>
<gene>
    <name evidence="1" type="primary">proS</name>
    <name type="ordered locus">HSM_0313</name>
</gene>
<sequence>MRTSKYLLSTLKETPNDAQVVSHQLMLRAGMIRPLASGLYNWLPTGLRVLKKVENIVREEMNKSGAIEVEMPVVQPAELWQESQRWEQYGPELLRFVDRGNRDFVLGPTHEEVITDLVHREVSSYKQLPLNLYQIQTKFRDEVRPRFGVMRGREFLMKDAYSFHTSKECLQNTYDVMYRTYNNIFTRLGLDFRAVQADTGSIGGSASHEFQVLAKSGEDDIVFSSNSDYAANIELAEAVAIGQRQAPSATMELVDTPNAKTINDLVEQFNLSVEKTVKTLIVKGANEDQPLIALIVRGDHELNEVKAQKLPEVADPLEFANEDEIKTKIGAGIGSLGPVNLPIPAIIDRSVALMSDFSTGANIDGKHYFNVNWDRDVALPKVADLRNVVEGDPSPDGKGTLQIKRGIEVGHIFQLGTKYSEAMKATVQGEDGRPQTMIMGCYGIGVSRVVAATIEQCHDEKGIIWSSDEIAPFTVAIIPMNMYKSKNVQIFAEELYQSLLNKNVDVIFDDRKERPGVMFADIELIGVPHMIVIGEKNLEKGEIEYKNRRTGEKQIIAKEQVLDFLAQRVNA</sequence>
<dbReference type="EC" id="6.1.1.15" evidence="1"/>
<dbReference type="EMBL" id="CP000947">
    <property type="protein sequence ID" value="ACA31945.1"/>
    <property type="molecule type" value="Genomic_DNA"/>
</dbReference>
<dbReference type="RefSeq" id="WP_012341174.1">
    <property type="nucleotide sequence ID" value="NC_010519.1"/>
</dbReference>
<dbReference type="SMR" id="B0UWK9"/>
<dbReference type="STRING" id="228400.HSM_0313"/>
<dbReference type="GeneID" id="31486593"/>
<dbReference type="KEGG" id="hsm:HSM_0313"/>
<dbReference type="HOGENOM" id="CLU_016739_0_0_6"/>
<dbReference type="GO" id="GO:0005829">
    <property type="term" value="C:cytosol"/>
    <property type="evidence" value="ECO:0007669"/>
    <property type="project" value="TreeGrafter"/>
</dbReference>
<dbReference type="GO" id="GO:0002161">
    <property type="term" value="F:aminoacyl-tRNA deacylase activity"/>
    <property type="evidence" value="ECO:0007669"/>
    <property type="project" value="InterPro"/>
</dbReference>
<dbReference type="GO" id="GO:0005524">
    <property type="term" value="F:ATP binding"/>
    <property type="evidence" value="ECO:0007669"/>
    <property type="project" value="UniProtKB-UniRule"/>
</dbReference>
<dbReference type="GO" id="GO:0004827">
    <property type="term" value="F:proline-tRNA ligase activity"/>
    <property type="evidence" value="ECO:0007669"/>
    <property type="project" value="UniProtKB-UniRule"/>
</dbReference>
<dbReference type="GO" id="GO:0006433">
    <property type="term" value="P:prolyl-tRNA aminoacylation"/>
    <property type="evidence" value="ECO:0007669"/>
    <property type="project" value="UniProtKB-UniRule"/>
</dbReference>
<dbReference type="CDD" id="cd04334">
    <property type="entry name" value="ProRS-INS"/>
    <property type="match status" value="1"/>
</dbReference>
<dbReference type="CDD" id="cd00861">
    <property type="entry name" value="ProRS_anticodon_short"/>
    <property type="match status" value="1"/>
</dbReference>
<dbReference type="CDD" id="cd00779">
    <property type="entry name" value="ProRS_core_prok"/>
    <property type="match status" value="1"/>
</dbReference>
<dbReference type="FunFam" id="3.30.930.10:FF:000043">
    <property type="entry name" value="Proline--tRNA ligase"/>
    <property type="match status" value="1"/>
</dbReference>
<dbReference type="FunFam" id="3.30.930.10:FF:000097">
    <property type="entry name" value="Proline--tRNA ligase"/>
    <property type="match status" value="1"/>
</dbReference>
<dbReference type="FunFam" id="3.90.960.10:FF:000001">
    <property type="entry name" value="Proline--tRNA ligase"/>
    <property type="match status" value="1"/>
</dbReference>
<dbReference type="Gene3D" id="3.40.50.800">
    <property type="entry name" value="Anticodon-binding domain"/>
    <property type="match status" value="1"/>
</dbReference>
<dbReference type="Gene3D" id="3.30.930.10">
    <property type="entry name" value="Bira Bifunctional Protein, Domain 2"/>
    <property type="match status" value="2"/>
</dbReference>
<dbReference type="HAMAP" id="MF_01569">
    <property type="entry name" value="Pro_tRNA_synth_type1"/>
    <property type="match status" value="1"/>
</dbReference>
<dbReference type="InterPro" id="IPR002314">
    <property type="entry name" value="aa-tRNA-synt_IIb"/>
</dbReference>
<dbReference type="InterPro" id="IPR006195">
    <property type="entry name" value="aa-tRNA-synth_II"/>
</dbReference>
<dbReference type="InterPro" id="IPR045864">
    <property type="entry name" value="aa-tRNA-synth_II/BPL/LPL"/>
</dbReference>
<dbReference type="InterPro" id="IPR004154">
    <property type="entry name" value="Anticodon-bd"/>
</dbReference>
<dbReference type="InterPro" id="IPR036621">
    <property type="entry name" value="Anticodon-bd_dom_sf"/>
</dbReference>
<dbReference type="InterPro" id="IPR002316">
    <property type="entry name" value="Pro-tRNA-ligase_IIa"/>
</dbReference>
<dbReference type="InterPro" id="IPR004500">
    <property type="entry name" value="Pro-tRNA-synth_IIa_bac-type"/>
</dbReference>
<dbReference type="InterPro" id="IPR023717">
    <property type="entry name" value="Pro-tRNA-Synthase_IIa_type1"/>
</dbReference>
<dbReference type="InterPro" id="IPR050062">
    <property type="entry name" value="Pro-tRNA_synthetase"/>
</dbReference>
<dbReference type="InterPro" id="IPR044140">
    <property type="entry name" value="ProRS_anticodon_short"/>
</dbReference>
<dbReference type="InterPro" id="IPR033730">
    <property type="entry name" value="ProRS_core_prok"/>
</dbReference>
<dbReference type="InterPro" id="IPR036754">
    <property type="entry name" value="YbaK/aa-tRNA-synt-asso_dom_sf"/>
</dbReference>
<dbReference type="InterPro" id="IPR007214">
    <property type="entry name" value="YbaK/aa-tRNA-synth-assoc-dom"/>
</dbReference>
<dbReference type="NCBIfam" id="NF006625">
    <property type="entry name" value="PRK09194.1"/>
    <property type="match status" value="1"/>
</dbReference>
<dbReference type="NCBIfam" id="TIGR00409">
    <property type="entry name" value="proS_fam_II"/>
    <property type="match status" value="1"/>
</dbReference>
<dbReference type="PANTHER" id="PTHR42753">
    <property type="entry name" value="MITOCHONDRIAL RIBOSOME PROTEIN L39/PROLYL-TRNA LIGASE FAMILY MEMBER"/>
    <property type="match status" value="1"/>
</dbReference>
<dbReference type="PANTHER" id="PTHR42753:SF2">
    <property type="entry name" value="PROLINE--TRNA LIGASE"/>
    <property type="match status" value="1"/>
</dbReference>
<dbReference type="Pfam" id="PF03129">
    <property type="entry name" value="HGTP_anticodon"/>
    <property type="match status" value="1"/>
</dbReference>
<dbReference type="Pfam" id="PF00587">
    <property type="entry name" value="tRNA-synt_2b"/>
    <property type="match status" value="1"/>
</dbReference>
<dbReference type="Pfam" id="PF04073">
    <property type="entry name" value="tRNA_edit"/>
    <property type="match status" value="1"/>
</dbReference>
<dbReference type="PIRSF" id="PIRSF001535">
    <property type="entry name" value="ProRS_1"/>
    <property type="match status" value="1"/>
</dbReference>
<dbReference type="PRINTS" id="PR01046">
    <property type="entry name" value="TRNASYNTHPRO"/>
</dbReference>
<dbReference type="SUPFAM" id="SSF52954">
    <property type="entry name" value="Class II aaRS ABD-related"/>
    <property type="match status" value="1"/>
</dbReference>
<dbReference type="SUPFAM" id="SSF55681">
    <property type="entry name" value="Class II aaRS and biotin synthetases"/>
    <property type="match status" value="1"/>
</dbReference>
<dbReference type="SUPFAM" id="SSF55826">
    <property type="entry name" value="YbaK/ProRS associated domain"/>
    <property type="match status" value="1"/>
</dbReference>
<dbReference type="PROSITE" id="PS50862">
    <property type="entry name" value="AA_TRNA_LIGASE_II"/>
    <property type="match status" value="1"/>
</dbReference>